<proteinExistence type="predicted"/>
<comment type="function">
    <text evidence="2 3">Transcription regulator that specifically regulates expression of genes involved in the novobiocin biosynthesis pathway. Probably acts as a positive regulator of transcription. Does not bind DNA.</text>
</comment>
<reference key="1">
    <citation type="journal article" date="2000" name="Antimicrob. Agents Chemother.">
        <title>Identification of the novobiocin biosynthetic gene cluster of Streptomyces spheroides NCIB 11891.</title>
        <authorList>
            <person name="Steffensky M."/>
            <person name="Muhlenweg A."/>
            <person name="Wang Z.X."/>
            <person name="Li S.M."/>
            <person name="Heide L."/>
        </authorList>
    </citation>
    <scope>NUCLEOTIDE SEQUENCE [GENOMIC DNA]</scope>
    <source>
        <strain>ATCC 23965 / DSM 40292 / JCM 4252 / NBRC 12917 / NCIMB 11891 / NRRL 2449</strain>
    </source>
</reference>
<reference key="2">
    <citation type="journal article" date="2003" name="Arch. Microbiol.">
        <title>Novobiocin biosynthesis: inactivation of the putative regulatory gene novE and heterologous expression of genes involved in aminocoumarin ring formation.</title>
        <authorList>
            <person name="Eustaquio A.S."/>
            <person name="Luft T."/>
            <person name="Wang Z.X."/>
            <person name="Gust B."/>
            <person name="Chater K.F."/>
            <person name="Li S.M."/>
            <person name="Heide L."/>
        </authorList>
    </citation>
    <scope>PRELIMINARY FUNCTION</scope>
</reference>
<reference key="3">
    <citation type="journal article" date="2008" name="Arch. Microbiol.">
        <title>novE and novG act as positive regulators of novobiocin biosynthesis.</title>
        <authorList>
            <person name="Dangel V."/>
            <person name="Eustaquio A.S."/>
            <person name="Gust B."/>
            <person name="Heide L."/>
        </authorList>
    </citation>
    <scope>FUNCTION</scope>
    <source>
        <strain>ATCC 23965 / DSM 40292 / JCM 4252 / NBRC 12917 / NCIMB 11891 / NRRL 2449</strain>
    </source>
</reference>
<reference key="4">
    <citation type="journal article" date="2009" name="Microbiology">
        <title>Transcriptional regulation of the novobiocin biosynthetic gene cluster.</title>
        <authorList>
            <person name="Dangel V."/>
            <person name="Harle J."/>
            <person name="Goerke C."/>
            <person name="Wolz C."/>
            <person name="Gust B."/>
            <person name="Pernodet J.L."/>
            <person name="Heide L."/>
        </authorList>
    </citation>
    <scope>FUNCTION</scope>
    <source>
        <strain>ATCC 23965 / DSM 40292 / JCM 4252 / NBRC 12917 / NCIMB 11891 / NRRL 2449</strain>
    </source>
</reference>
<name>NOVE_STRNV</name>
<feature type="chain" id="PRO_0000423989" description="Transcriptional regulator NovE">
    <location>
        <begin position="1"/>
        <end position="217"/>
    </location>
</feature>
<feature type="region of interest" description="Disordered" evidence="1">
    <location>
        <begin position="1"/>
        <end position="41"/>
    </location>
</feature>
<gene>
    <name type="primary">novE</name>
</gene>
<dbReference type="EMBL" id="AF170880">
    <property type="protein sequence ID" value="AAF67498.1"/>
    <property type="molecule type" value="Genomic_DNA"/>
</dbReference>
<dbReference type="RefSeq" id="WP_165821709.1">
    <property type="nucleotide sequence ID" value="NZ_JBFBIX010000004.1"/>
</dbReference>
<dbReference type="SMR" id="Q9L9G3"/>
<dbReference type="GO" id="GO:0017000">
    <property type="term" value="P:antibiotic biosynthetic process"/>
    <property type="evidence" value="ECO:0007669"/>
    <property type="project" value="UniProtKB-KW"/>
</dbReference>
<dbReference type="InterPro" id="IPR049735">
    <property type="entry name" value="NovE/LmbU-like"/>
</dbReference>
<dbReference type="NCBIfam" id="NF038070">
    <property type="entry name" value="LmbU_fam_TF"/>
    <property type="match status" value="1"/>
</dbReference>
<accession>Q9L9G3</accession>
<protein>
    <recommendedName>
        <fullName>Transcriptional regulator NovE</fullName>
    </recommendedName>
    <alternativeName>
        <fullName>Novobiocin biosynthesis protein E</fullName>
    </alternativeName>
</protein>
<organism>
    <name type="scientific">Streptomyces niveus</name>
    <name type="common">Streptomyces spheroides</name>
    <dbReference type="NCBI Taxonomy" id="193462"/>
    <lineage>
        <taxon>Bacteria</taxon>
        <taxon>Bacillati</taxon>
        <taxon>Actinomycetota</taxon>
        <taxon>Actinomycetes</taxon>
        <taxon>Kitasatosporales</taxon>
        <taxon>Streptomycetaceae</taxon>
        <taxon>Streptomyces</taxon>
    </lineage>
</organism>
<sequence length="217" mass="24767">MVASGRTASKGRGNGATPVRPTAGDATPVDSGQPSDTTYGGLEVSAERTRLRIPRDLSLEAWCRLGGRILAVCDSSVWWIGDWLVFGQNQYGDRYRRAMKETKLDYQTLRNYAWVARKFEPSRRRDSLTFQHHMEVAALSEAEQDHWLDFAVRLNWSRNELRKQIRASLSGEEDDLRCEVQLNLQLDELRLERWREAARGSNLTLTDWILSVVDGAV</sequence>
<keyword id="KW-0045">Antibiotic biosynthesis</keyword>
<keyword id="KW-0804">Transcription</keyword>
<keyword id="KW-0805">Transcription regulation</keyword>
<evidence type="ECO:0000256" key="1">
    <source>
        <dbReference type="SAM" id="MobiDB-lite"/>
    </source>
</evidence>
<evidence type="ECO:0000269" key="2">
    <source>
    </source>
</evidence>
<evidence type="ECO:0000269" key="3">
    <source>
    </source>
</evidence>